<organism>
    <name type="scientific">Caenorhabditis elegans</name>
    <dbReference type="NCBI Taxonomy" id="6239"/>
    <lineage>
        <taxon>Eukaryota</taxon>
        <taxon>Metazoa</taxon>
        <taxon>Ecdysozoa</taxon>
        <taxon>Nematoda</taxon>
        <taxon>Chromadorea</taxon>
        <taxon>Rhabditida</taxon>
        <taxon>Rhabditina</taxon>
        <taxon>Rhabditomorpha</taxon>
        <taxon>Rhabditoidea</taxon>
        <taxon>Rhabditidae</taxon>
        <taxon>Peloderinae</taxon>
        <taxon>Caenorhabditis</taxon>
    </lineage>
</organism>
<dbReference type="EMBL" id="FO080310">
    <property type="protein sequence ID" value="CCD62776.1"/>
    <property type="molecule type" value="Genomic_DNA"/>
</dbReference>
<dbReference type="PIR" id="T15396">
    <property type="entry name" value="T15396"/>
</dbReference>
<dbReference type="SMR" id="Q11124"/>
<dbReference type="FunCoup" id="Q11124">
    <property type="interactions" value="58"/>
</dbReference>
<dbReference type="STRING" id="6239.C03F11.3.1"/>
<dbReference type="PaxDb" id="6239-C03F11.3"/>
<dbReference type="PeptideAtlas" id="Q11124"/>
<dbReference type="EnsemblMetazoa" id="C03F11.3.1">
    <property type="protein sequence ID" value="C03F11.3.1"/>
    <property type="gene ID" value="WBGene00015389"/>
</dbReference>
<dbReference type="KEGG" id="cel:CELE_C03F11.3"/>
<dbReference type="UCSC" id="C03F11.3">
    <property type="organism name" value="c. elegans"/>
</dbReference>
<dbReference type="AGR" id="WB:WBGene00015389"/>
<dbReference type="CTD" id="180812"/>
<dbReference type="WormBase" id="C03F11.3">
    <property type="protein sequence ID" value="CE37606"/>
    <property type="gene ID" value="WBGene00015389"/>
    <property type="gene designation" value="scav-1"/>
</dbReference>
<dbReference type="eggNOG" id="KOG3776">
    <property type="taxonomic scope" value="Eukaryota"/>
</dbReference>
<dbReference type="GeneTree" id="ENSGT00940000153372"/>
<dbReference type="HOGENOM" id="CLU_019853_3_0_1"/>
<dbReference type="InParanoid" id="Q11124"/>
<dbReference type="OMA" id="YYGISAV"/>
<dbReference type="OrthoDB" id="18585at2759"/>
<dbReference type="PhylomeDB" id="Q11124"/>
<dbReference type="Reactome" id="R-CEL-114608">
    <property type="pathway name" value="Platelet degranulation"/>
</dbReference>
<dbReference type="Reactome" id="R-CEL-1236973">
    <property type="pathway name" value="Cross-presentation of particulate exogenous antigens (phagosomes)"/>
</dbReference>
<dbReference type="Reactome" id="R-CEL-434313">
    <property type="pathway name" value="Intracellular metabolism of fatty acids regulates insulin secretion"/>
</dbReference>
<dbReference type="Reactome" id="R-CEL-6798695">
    <property type="pathway name" value="Neutrophil degranulation"/>
</dbReference>
<dbReference type="PRO" id="PR:Q11124"/>
<dbReference type="Proteomes" id="UP000001940">
    <property type="component" value="Chromosome X"/>
</dbReference>
<dbReference type="Bgee" id="WBGene00015389">
    <property type="expression patterns" value="Expressed in larva and 4 other cell types or tissues"/>
</dbReference>
<dbReference type="GO" id="GO:0016020">
    <property type="term" value="C:membrane"/>
    <property type="evidence" value="ECO:0000318"/>
    <property type="project" value="GO_Central"/>
</dbReference>
<dbReference type="GO" id="GO:0005044">
    <property type="term" value="F:scavenger receptor activity"/>
    <property type="evidence" value="ECO:0000318"/>
    <property type="project" value="GO_Central"/>
</dbReference>
<dbReference type="InterPro" id="IPR002159">
    <property type="entry name" value="CD36_fam"/>
</dbReference>
<dbReference type="PANTHER" id="PTHR11923:SF105">
    <property type="entry name" value="PROTEIN CBR-SCAV-1"/>
    <property type="match status" value="1"/>
</dbReference>
<dbReference type="PANTHER" id="PTHR11923">
    <property type="entry name" value="SCAVENGER RECEPTOR CLASS B TYPE-1 SR-B1"/>
    <property type="match status" value="1"/>
</dbReference>
<dbReference type="Pfam" id="PF01130">
    <property type="entry name" value="CD36"/>
    <property type="match status" value="1"/>
</dbReference>
<dbReference type="PRINTS" id="PR01609">
    <property type="entry name" value="CD36FAMILY"/>
</dbReference>
<evidence type="ECO:0000255" key="1"/>
<evidence type="ECO:0000305" key="2"/>
<protein>
    <recommendedName>
        <fullName>Uncharacterized protein C03F11.3</fullName>
    </recommendedName>
</protein>
<comment type="subcellular location">
    <subcellularLocation>
        <location evidence="2">Membrane</location>
        <topology evidence="2">Multi-pass membrane protein</topology>
    </subcellularLocation>
</comment>
<comment type="similarity">
    <text evidence="2">Belongs to the CD36 family.</text>
</comment>
<accession>Q11124</accession>
<feature type="chain" id="PRO_0000144165" description="Uncharacterized protein C03F11.3">
    <location>
        <begin position="1"/>
        <end position="563"/>
    </location>
</feature>
<feature type="topological domain" description="Cytoplasmic" evidence="1">
    <location>
        <begin position="1"/>
        <end position="13"/>
    </location>
</feature>
<feature type="transmembrane region" description="Helical" evidence="1">
    <location>
        <begin position="14"/>
        <end position="34"/>
    </location>
</feature>
<feature type="topological domain" description="Lumenal" evidence="1">
    <location>
        <begin position="35"/>
        <end position="528"/>
    </location>
</feature>
<feature type="transmembrane region" description="Helical" evidence="1">
    <location>
        <begin position="529"/>
        <end position="549"/>
    </location>
</feature>
<feature type="topological domain" description="Cytoplasmic" evidence="1">
    <location>
        <begin position="550"/>
        <end position="563"/>
    </location>
</feature>
<feature type="glycosylation site" description="N-linked (GlcNAc...) asparagine" evidence="1">
    <location>
        <position position="43"/>
    </location>
</feature>
<feature type="glycosylation site" description="N-linked (GlcNAc...) asparagine" evidence="1">
    <location>
        <position position="112"/>
    </location>
</feature>
<feature type="glycosylation site" description="N-linked (GlcNAc...) asparagine" evidence="1">
    <location>
        <position position="133"/>
    </location>
</feature>
<feature type="glycosylation site" description="N-linked (GlcNAc...) asparagine" evidence="1">
    <location>
        <position position="188"/>
    </location>
</feature>
<feature type="glycosylation site" description="N-linked (GlcNAc...) asparagine" evidence="1">
    <location>
        <position position="265"/>
    </location>
</feature>
<feature type="glycosylation site" description="N-linked (GlcNAc...) asparagine" evidence="1">
    <location>
        <position position="295"/>
    </location>
</feature>
<feature type="glycosylation site" description="N-linked (GlcNAc...) asparagine" evidence="1">
    <location>
        <position position="315"/>
    </location>
</feature>
<feature type="glycosylation site" description="N-linked (GlcNAc...) asparagine" evidence="1">
    <location>
        <position position="502"/>
    </location>
</feature>
<sequence length="563" mass="62702">MASRSCICQVSAGIIFLIGAALLVAGLVIVLNVFPNIVNNQINDSKVLGLNADGTLNSFTDSWVNSKYISTMQYWVYDYTNTIGIMNRAIYPDVREKGPYAFDEILTMDKLNFSENGEFMEFRQIQTFVFNPNKSCAGCDPYKDKVLIPDMGFQVGIDQIDTVIEGILKNPLAATICHAIMKGKPNANQTCSNLGALIEGELGTLISLFNVSPFTTVTVDQLLFSGYKTPFVEKFLDEALGMLHFLFGTAPKPLDDPPIQLNPLNGTSDIINTVLTGKTDPLKAGYMTEFRSISNNSLFNSIGNTLPPMWWPYANKTYCKDPNSALVLTGTNGDYFKNFVKKTDILPAFVSDVCRTIHFVFDREVTVKGFKGYRFVMPPTQFDYSLDENCGYCIPLKYGSYEYPAQSACLPSGLLDISQCTGGPIIMSKPHFYQASKVVSKFVPRFKPTYDNDETMLDIEPNTGTVLQAQKRLQINMLVNQFKHIRSYSVMRPGAYPLAWVNESFYMDQNTIDQLNSQLFTPVSTVNTICWIAVGLGAGLIALSIVMVIVSFCCFRDEHHKTS</sequence>
<proteinExistence type="inferred from homology"/>
<keyword id="KW-0325">Glycoprotein</keyword>
<keyword id="KW-0472">Membrane</keyword>
<keyword id="KW-1185">Reference proteome</keyword>
<keyword id="KW-0812">Transmembrane</keyword>
<keyword id="KW-1133">Transmembrane helix</keyword>
<name>YX13_CAEEL</name>
<reference key="1">
    <citation type="journal article" date="1998" name="Science">
        <title>Genome sequence of the nematode C. elegans: a platform for investigating biology.</title>
        <authorList>
            <consortium name="The C. elegans sequencing consortium"/>
        </authorList>
    </citation>
    <scope>NUCLEOTIDE SEQUENCE [LARGE SCALE GENOMIC DNA]</scope>
    <source>
        <strain>Bristol N2</strain>
    </source>
</reference>
<gene>
    <name type="ORF">C03F11.3</name>
</gene>